<dbReference type="EC" id="3.13.2.1" evidence="1"/>
<dbReference type="EMBL" id="AE008922">
    <property type="protein sequence ID" value="AAM40067.1"/>
    <property type="molecule type" value="Genomic_DNA"/>
</dbReference>
<dbReference type="RefSeq" id="NP_636143.1">
    <property type="nucleotide sequence ID" value="NC_003902.1"/>
</dbReference>
<dbReference type="RefSeq" id="WP_011035988.1">
    <property type="nucleotide sequence ID" value="NC_003902.1"/>
</dbReference>
<dbReference type="SMR" id="Q8PCH5"/>
<dbReference type="STRING" id="190485.XCC0752"/>
<dbReference type="EnsemblBacteria" id="AAM40067">
    <property type="protein sequence ID" value="AAM40067"/>
    <property type="gene ID" value="XCC0752"/>
</dbReference>
<dbReference type="KEGG" id="xcc:XCC0752"/>
<dbReference type="PATRIC" id="fig|190485.4.peg.820"/>
<dbReference type="eggNOG" id="COG0499">
    <property type="taxonomic scope" value="Bacteria"/>
</dbReference>
<dbReference type="HOGENOM" id="CLU_025194_2_1_6"/>
<dbReference type="OrthoDB" id="9802717at2"/>
<dbReference type="UniPathway" id="UPA00314">
    <property type="reaction ID" value="UER00076"/>
</dbReference>
<dbReference type="Proteomes" id="UP000001010">
    <property type="component" value="Chromosome"/>
</dbReference>
<dbReference type="GO" id="GO:0005829">
    <property type="term" value="C:cytosol"/>
    <property type="evidence" value="ECO:0000318"/>
    <property type="project" value="GO_Central"/>
</dbReference>
<dbReference type="GO" id="GO:0004013">
    <property type="term" value="F:adenosylhomocysteinase activity"/>
    <property type="evidence" value="ECO:0000318"/>
    <property type="project" value="GO_Central"/>
</dbReference>
<dbReference type="GO" id="GO:0071269">
    <property type="term" value="P:L-homocysteine biosynthetic process"/>
    <property type="evidence" value="ECO:0007669"/>
    <property type="project" value="UniProtKB-UniRule"/>
</dbReference>
<dbReference type="GO" id="GO:0006730">
    <property type="term" value="P:one-carbon metabolic process"/>
    <property type="evidence" value="ECO:0007669"/>
    <property type="project" value="UniProtKB-KW"/>
</dbReference>
<dbReference type="GO" id="GO:0033353">
    <property type="term" value="P:S-adenosylmethionine cycle"/>
    <property type="evidence" value="ECO:0000318"/>
    <property type="project" value="GO_Central"/>
</dbReference>
<dbReference type="CDD" id="cd00401">
    <property type="entry name" value="SAHH"/>
    <property type="match status" value="1"/>
</dbReference>
<dbReference type="FunFam" id="3.40.50.720:FF:000004">
    <property type="entry name" value="Adenosylhomocysteinase"/>
    <property type="match status" value="1"/>
</dbReference>
<dbReference type="Gene3D" id="3.40.50.1480">
    <property type="entry name" value="Adenosylhomocysteinase-like"/>
    <property type="match status" value="1"/>
</dbReference>
<dbReference type="Gene3D" id="3.40.50.720">
    <property type="entry name" value="NAD(P)-binding Rossmann-like Domain"/>
    <property type="match status" value="1"/>
</dbReference>
<dbReference type="HAMAP" id="MF_00563">
    <property type="entry name" value="AdoHcyase"/>
    <property type="match status" value="1"/>
</dbReference>
<dbReference type="InterPro" id="IPR042172">
    <property type="entry name" value="Adenosylhomocyst_ase-like_sf"/>
</dbReference>
<dbReference type="InterPro" id="IPR000043">
    <property type="entry name" value="Adenosylhomocysteinase-like"/>
</dbReference>
<dbReference type="InterPro" id="IPR015878">
    <property type="entry name" value="Ado_hCys_hydrolase_NAD-bd"/>
</dbReference>
<dbReference type="InterPro" id="IPR036291">
    <property type="entry name" value="NAD(P)-bd_dom_sf"/>
</dbReference>
<dbReference type="InterPro" id="IPR020082">
    <property type="entry name" value="S-Ado-L-homoCys_hydrolase_CS"/>
</dbReference>
<dbReference type="NCBIfam" id="TIGR00936">
    <property type="entry name" value="ahcY"/>
    <property type="match status" value="1"/>
</dbReference>
<dbReference type="NCBIfam" id="NF004005">
    <property type="entry name" value="PRK05476.2-3"/>
    <property type="match status" value="1"/>
</dbReference>
<dbReference type="PANTHER" id="PTHR23420">
    <property type="entry name" value="ADENOSYLHOMOCYSTEINASE"/>
    <property type="match status" value="1"/>
</dbReference>
<dbReference type="PANTHER" id="PTHR23420:SF0">
    <property type="entry name" value="ADENOSYLHOMOCYSTEINASE"/>
    <property type="match status" value="1"/>
</dbReference>
<dbReference type="Pfam" id="PF05221">
    <property type="entry name" value="AdoHcyase"/>
    <property type="match status" value="1"/>
</dbReference>
<dbReference type="Pfam" id="PF00670">
    <property type="entry name" value="AdoHcyase_NAD"/>
    <property type="match status" value="1"/>
</dbReference>
<dbReference type="PIRSF" id="PIRSF001109">
    <property type="entry name" value="Ad_hcy_hydrolase"/>
    <property type="match status" value="1"/>
</dbReference>
<dbReference type="SMART" id="SM00996">
    <property type="entry name" value="AdoHcyase"/>
    <property type="match status" value="1"/>
</dbReference>
<dbReference type="SMART" id="SM00997">
    <property type="entry name" value="AdoHcyase_NAD"/>
    <property type="match status" value="1"/>
</dbReference>
<dbReference type="SUPFAM" id="SSF52283">
    <property type="entry name" value="Formate/glycerate dehydrogenase catalytic domain-like"/>
    <property type="match status" value="1"/>
</dbReference>
<dbReference type="SUPFAM" id="SSF51735">
    <property type="entry name" value="NAD(P)-binding Rossmann-fold domains"/>
    <property type="match status" value="1"/>
</dbReference>
<dbReference type="PROSITE" id="PS00738">
    <property type="entry name" value="ADOHCYASE_1"/>
    <property type="match status" value="1"/>
</dbReference>
<dbReference type="PROSITE" id="PS00739">
    <property type="entry name" value="ADOHCYASE_2"/>
    <property type="match status" value="1"/>
</dbReference>
<name>SAHH_XANCP</name>
<comment type="function">
    <text evidence="1">May play a key role in the regulation of the intracellular concentration of adenosylhomocysteine.</text>
</comment>
<comment type="catalytic activity">
    <reaction evidence="1">
        <text>S-adenosyl-L-homocysteine + H2O = L-homocysteine + adenosine</text>
        <dbReference type="Rhea" id="RHEA:21708"/>
        <dbReference type="ChEBI" id="CHEBI:15377"/>
        <dbReference type="ChEBI" id="CHEBI:16335"/>
        <dbReference type="ChEBI" id="CHEBI:57856"/>
        <dbReference type="ChEBI" id="CHEBI:58199"/>
        <dbReference type="EC" id="3.13.2.1"/>
    </reaction>
</comment>
<comment type="cofactor">
    <cofactor evidence="1">
        <name>NAD(+)</name>
        <dbReference type="ChEBI" id="CHEBI:57540"/>
    </cofactor>
    <text evidence="1">Binds 1 NAD(+) per subunit.</text>
</comment>
<comment type="pathway">
    <text evidence="1">Amino-acid biosynthesis; L-homocysteine biosynthesis; L-homocysteine from S-adenosyl-L-homocysteine: step 1/1.</text>
</comment>
<comment type="subcellular location">
    <subcellularLocation>
        <location evidence="1">Cytoplasm</location>
    </subcellularLocation>
</comment>
<comment type="similarity">
    <text evidence="1">Belongs to the adenosylhomocysteinase family.</text>
</comment>
<feature type="chain" id="PRO_0000116997" description="Adenosylhomocysteinase">
    <location>
        <begin position="1"/>
        <end position="480"/>
    </location>
</feature>
<feature type="binding site" evidence="1">
    <location>
        <position position="63"/>
    </location>
    <ligand>
        <name>substrate</name>
    </ligand>
</feature>
<feature type="binding site" evidence="1">
    <location>
        <position position="142"/>
    </location>
    <ligand>
        <name>substrate</name>
    </ligand>
</feature>
<feature type="binding site" evidence="1">
    <location>
        <position position="203"/>
    </location>
    <ligand>
        <name>substrate</name>
    </ligand>
</feature>
<feature type="binding site" evidence="1">
    <location>
        <begin position="204"/>
        <end position="206"/>
    </location>
    <ligand>
        <name>NAD(+)</name>
        <dbReference type="ChEBI" id="CHEBI:57540"/>
    </ligand>
</feature>
<feature type="binding site" evidence="1">
    <location>
        <position position="233"/>
    </location>
    <ligand>
        <name>substrate</name>
    </ligand>
</feature>
<feature type="binding site" evidence="1">
    <location>
        <position position="237"/>
    </location>
    <ligand>
        <name>substrate</name>
    </ligand>
</feature>
<feature type="binding site" evidence="1">
    <location>
        <position position="238"/>
    </location>
    <ligand>
        <name>NAD(+)</name>
        <dbReference type="ChEBI" id="CHEBI:57540"/>
    </ligand>
</feature>
<feature type="binding site" evidence="1">
    <location>
        <begin position="267"/>
        <end position="272"/>
    </location>
    <ligand>
        <name>NAD(+)</name>
        <dbReference type="ChEBI" id="CHEBI:57540"/>
    </ligand>
</feature>
<feature type="binding site" evidence="1">
    <location>
        <position position="290"/>
    </location>
    <ligand>
        <name>NAD(+)</name>
        <dbReference type="ChEBI" id="CHEBI:57540"/>
    </ligand>
</feature>
<feature type="binding site" evidence="1">
    <location>
        <position position="325"/>
    </location>
    <ligand>
        <name>NAD(+)</name>
        <dbReference type="ChEBI" id="CHEBI:57540"/>
    </ligand>
</feature>
<feature type="binding site" evidence="1">
    <location>
        <begin position="346"/>
        <end position="348"/>
    </location>
    <ligand>
        <name>NAD(+)</name>
        <dbReference type="ChEBI" id="CHEBI:57540"/>
    </ligand>
</feature>
<feature type="binding site" evidence="1">
    <location>
        <position position="394"/>
    </location>
    <ligand>
        <name>NAD(+)</name>
        <dbReference type="ChEBI" id="CHEBI:57540"/>
    </ligand>
</feature>
<protein>
    <recommendedName>
        <fullName evidence="1">Adenosylhomocysteinase</fullName>
        <ecNumber evidence="1">3.13.2.1</ecNumber>
    </recommendedName>
    <alternativeName>
        <fullName evidence="1">S-adenosyl-L-homocysteine hydrolase</fullName>
        <shortName evidence="1">AdoHcyase</shortName>
    </alternativeName>
</protein>
<reference key="1">
    <citation type="journal article" date="2002" name="Nature">
        <title>Comparison of the genomes of two Xanthomonas pathogens with differing host specificities.</title>
        <authorList>
            <person name="da Silva A.C.R."/>
            <person name="Ferro J.A."/>
            <person name="Reinach F.C."/>
            <person name="Farah C.S."/>
            <person name="Furlan L.R."/>
            <person name="Quaggio R.B."/>
            <person name="Monteiro-Vitorello C.B."/>
            <person name="Van Sluys M.A."/>
            <person name="Almeida N.F. Jr."/>
            <person name="Alves L.M.C."/>
            <person name="do Amaral A.M."/>
            <person name="Bertolini M.C."/>
            <person name="Camargo L.E.A."/>
            <person name="Camarotte G."/>
            <person name="Cannavan F."/>
            <person name="Cardozo J."/>
            <person name="Chambergo F."/>
            <person name="Ciapina L.P."/>
            <person name="Cicarelli R.M.B."/>
            <person name="Coutinho L.L."/>
            <person name="Cursino-Santos J.R."/>
            <person name="El-Dorry H."/>
            <person name="Faria J.B."/>
            <person name="Ferreira A.J.S."/>
            <person name="Ferreira R.C.C."/>
            <person name="Ferro M.I.T."/>
            <person name="Formighieri E.F."/>
            <person name="Franco M.C."/>
            <person name="Greggio C.C."/>
            <person name="Gruber A."/>
            <person name="Katsuyama A.M."/>
            <person name="Kishi L.T."/>
            <person name="Leite R.P."/>
            <person name="Lemos E.G.M."/>
            <person name="Lemos M.V.F."/>
            <person name="Locali E.C."/>
            <person name="Machado M.A."/>
            <person name="Madeira A.M.B.N."/>
            <person name="Martinez-Rossi N.M."/>
            <person name="Martins E.C."/>
            <person name="Meidanis J."/>
            <person name="Menck C.F.M."/>
            <person name="Miyaki C.Y."/>
            <person name="Moon D.H."/>
            <person name="Moreira L.M."/>
            <person name="Novo M.T.M."/>
            <person name="Okura V.K."/>
            <person name="Oliveira M.C."/>
            <person name="Oliveira V.R."/>
            <person name="Pereira H.A."/>
            <person name="Rossi A."/>
            <person name="Sena J.A.D."/>
            <person name="Silva C."/>
            <person name="de Souza R.F."/>
            <person name="Spinola L.A.F."/>
            <person name="Takita M.A."/>
            <person name="Tamura R.E."/>
            <person name="Teixeira E.C."/>
            <person name="Tezza R.I.D."/>
            <person name="Trindade dos Santos M."/>
            <person name="Truffi D."/>
            <person name="Tsai S.M."/>
            <person name="White F.F."/>
            <person name="Setubal J.C."/>
            <person name="Kitajima J.P."/>
        </authorList>
    </citation>
    <scope>NUCLEOTIDE SEQUENCE [LARGE SCALE GENOMIC DNA]</scope>
    <source>
        <strain>ATCC 33913 / DSM 3586 / NCPPB 528 / LMG 568 / P 25</strain>
    </source>
</reference>
<evidence type="ECO:0000255" key="1">
    <source>
        <dbReference type="HAMAP-Rule" id="MF_00563"/>
    </source>
</evidence>
<sequence>MNAVAKTVPHTDYKIADISLADWGRKELDIAEHEMPGLMSIRRKHAQTKPLKDVRITGSLHMTIQTAVLIETLKDIGANVRWASCNIFSTQDHAAAAIAATGTPVFAWKGETLEEYWDCTLDALTFTLPDGTLTGPELVVDDGGDVTLLIHKGYELENGSTWVDEPASSHEEGVIKALLKRVAVERPGYWARVVKDWKGVSEETTTGVHRLYQIAEAGKLLIPAINVNDSVTKSKFDNLYGCRESLADGLKRAMDVMLAGKVAVVCGYGDVGKGSAASLRAYGARVIVTEIDPICALQASMEGFEVNTIESTLGRGDIYVTTTGNKDIITVEHLQAMKDQAIVCNIGHFDNEIQVDALNALKGVEKINIKPQVDKYVFGNGNAIFLLADGRLVNLGCATGHPSFVMSNSFANQTLAQIDLWEKRDSYEKKVYILPKHLDEEVARLHLEKIGVKLTTLTKDQADYLGVDVAGPYKPDHYRY</sequence>
<keyword id="KW-0963">Cytoplasm</keyword>
<keyword id="KW-0378">Hydrolase</keyword>
<keyword id="KW-0520">NAD</keyword>
<keyword id="KW-0554">One-carbon metabolism</keyword>
<keyword id="KW-1185">Reference proteome</keyword>
<gene>
    <name evidence="1" type="primary">ahcY</name>
    <name type="synonym">sahH</name>
    <name type="ordered locus">XCC0752</name>
</gene>
<proteinExistence type="inferred from homology"/>
<accession>Q8PCH5</accession>
<organism>
    <name type="scientific">Xanthomonas campestris pv. campestris (strain ATCC 33913 / DSM 3586 / NCPPB 528 / LMG 568 / P 25)</name>
    <dbReference type="NCBI Taxonomy" id="190485"/>
    <lineage>
        <taxon>Bacteria</taxon>
        <taxon>Pseudomonadati</taxon>
        <taxon>Pseudomonadota</taxon>
        <taxon>Gammaproteobacteria</taxon>
        <taxon>Lysobacterales</taxon>
        <taxon>Lysobacteraceae</taxon>
        <taxon>Xanthomonas</taxon>
    </lineage>
</organism>